<reference key="1">
    <citation type="journal article" date="2002" name="Nucleic Acids Res.">
        <title>Genome sequence of Shigella flexneri 2a: insights into pathogenicity through comparison with genomes of Escherichia coli K12 and O157.</title>
        <authorList>
            <person name="Jin Q."/>
            <person name="Yuan Z."/>
            <person name="Xu J."/>
            <person name="Wang Y."/>
            <person name="Shen Y."/>
            <person name="Lu W."/>
            <person name="Wang J."/>
            <person name="Liu H."/>
            <person name="Yang J."/>
            <person name="Yang F."/>
            <person name="Zhang X."/>
            <person name="Zhang J."/>
            <person name="Yang G."/>
            <person name="Wu H."/>
            <person name="Qu D."/>
            <person name="Dong J."/>
            <person name="Sun L."/>
            <person name="Xue Y."/>
            <person name="Zhao A."/>
            <person name="Gao Y."/>
            <person name="Zhu J."/>
            <person name="Kan B."/>
            <person name="Ding K."/>
            <person name="Chen S."/>
            <person name="Cheng H."/>
            <person name="Yao Z."/>
            <person name="He B."/>
            <person name="Chen R."/>
            <person name="Ma D."/>
            <person name="Qiang B."/>
            <person name="Wen Y."/>
            <person name="Hou Y."/>
            <person name="Yu J."/>
        </authorList>
    </citation>
    <scope>NUCLEOTIDE SEQUENCE [LARGE SCALE GENOMIC DNA]</scope>
    <source>
        <strain>301 / Serotype 2a</strain>
    </source>
</reference>
<reference key="2">
    <citation type="journal article" date="2003" name="Infect. Immun.">
        <title>Complete genome sequence and comparative genomics of Shigella flexneri serotype 2a strain 2457T.</title>
        <authorList>
            <person name="Wei J."/>
            <person name="Goldberg M.B."/>
            <person name="Burland V."/>
            <person name="Venkatesan M.M."/>
            <person name="Deng W."/>
            <person name="Fournier G."/>
            <person name="Mayhew G.F."/>
            <person name="Plunkett G. III"/>
            <person name="Rose D.J."/>
            <person name="Darling A."/>
            <person name="Mau B."/>
            <person name="Perna N.T."/>
            <person name="Payne S.M."/>
            <person name="Runyen-Janecky L.J."/>
            <person name="Zhou S."/>
            <person name="Schwartz D.C."/>
            <person name="Blattner F.R."/>
        </authorList>
    </citation>
    <scope>NUCLEOTIDE SEQUENCE [LARGE SCALE GENOMIC DNA]</scope>
    <source>
        <strain>ATCC 700930 / 2457T / Serotype 2a</strain>
    </source>
</reference>
<name>TALA_SHIFL</name>
<gene>
    <name evidence="2" type="primary">talA</name>
    <name type="ordered locus">SF2506</name>
    <name type="ordered locus">S2657</name>
</gene>
<proteinExistence type="inferred from homology"/>
<dbReference type="EC" id="2.2.1.2" evidence="2"/>
<dbReference type="EMBL" id="AE005674">
    <property type="protein sequence ID" value="AAN44010.1"/>
    <property type="molecule type" value="Genomic_DNA"/>
</dbReference>
<dbReference type="EMBL" id="AE014073">
    <property type="protein sequence ID" value="AAP17825.1"/>
    <property type="molecule type" value="Genomic_DNA"/>
</dbReference>
<dbReference type="RefSeq" id="NP_708303.1">
    <property type="nucleotide sequence ID" value="NC_004337.2"/>
</dbReference>
<dbReference type="SMR" id="Q83QM8"/>
<dbReference type="STRING" id="198214.SF2506"/>
<dbReference type="PaxDb" id="198214-SF2506"/>
<dbReference type="GeneID" id="1026828"/>
<dbReference type="KEGG" id="sfl:SF2506"/>
<dbReference type="KEGG" id="sfx:S2657"/>
<dbReference type="PATRIC" id="fig|198214.7.peg.2996"/>
<dbReference type="HOGENOM" id="CLU_047470_0_1_6"/>
<dbReference type="UniPathway" id="UPA00115">
    <property type="reaction ID" value="UER00414"/>
</dbReference>
<dbReference type="Proteomes" id="UP000001006">
    <property type="component" value="Chromosome"/>
</dbReference>
<dbReference type="Proteomes" id="UP000002673">
    <property type="component" value="Chromosome"/>
</dbReference>
<dbReference type="GO" id="GO:0005829">
    <property type="term" value="C:cytosol"/>
    <property type="evidence" value="ECO:0007669"/>
    <property type="project" value="TreeGrafter"/>
</dbReference>
<dbReference type="GO" id="GO:0004801">
    <property type="term" value="F:transaldolase activity"/>
    <property type="evidence" value="ECO:0000250"/>
    <property type="project" value="UniProtKB"/>
</dbReference>
<dbReference type="GO" id="GO:0005975">
    <property type="term" value="P:carbohydrate metabolic process"/>
    <property type="evidence" value="ECO:0007669"/>
    <property type="project" value="InterPro"/>
</dbReference>
<dbReference type="GO" id="GO:0006098">
    <property type="term" value="P:pentose-phosphate shunt"/>
    <property type="evidence" value="ECO:0007669"/>
    <property type="project" value="UniProtKB-UniRule"/>
</dbReference>
<dbReference type="CDD" id="cd00957">
    <property type="entry name" value="Transaldolase_TalAB"/>
    <property type="match status" value="1"/>
</dbReference>
<dbReference type="FunFam" id="3.20.20.70:FF:000002">
    <property type="entry name" value="Transaldolase"/>
    <property type="match status" value="1"/>
</dbReference>
<dbReference type="Gene3D" id="3.20.20.70">
    <property type="entry name" value="Aldolase class I"/>
    <property type="match status" value="1"/>
</dbReference>
<dbReference type="HAMAP" id="MF_00492">
    <property type="entry name" value="Transaldolase_1"/>
    <property type="match status" value="1"/>
</dbReference>
<dbReference type="InterPro" id="IPR013785">
    <property type="entry name" value="Aldolase_TIM"/>
</dbReference>
<dbReference type="InterPro" id="IPR001585">
    <property type="entry name" value="TAL/FSA"/>
</dbReference>
<dbReference type="InterPro" id="IPR004730">
    <property type="entry name" value="Transaldolase_1"/>
</dbReference>
<dbReference type="InterPro" id="IPR018225">
    <property type="entry name" value="Transaldolase_AS"/>
</dbReference>
<dbReference type="NCBIfam" id="NF009001">
    <property type="entry name" value="PRK12346.1"/>
    <property type="match status" value="1"/>
</dbReference>
<dbReference type="NCBIfam" id="TIGR00874">
    <property type="entry name" value="talAB"/>
    <property type="match status" value="1"/>
</dbReference>
<dbReference type="PANTHER" id="PTHR10683">
    <property type="entry name" value="TRANSALDOLASE"/>
    <property type="match status" value="1"/>
</dbReference>
<dbReference type="PANTHER" id="PTHR10683:SF16">
    <property type="entry name" value="TRANSALDOLASE A"/>
    <property type="match status" value="1"/>
</dbReference>
<dbReference type="Pfam" id="PF00923">
    <property type="entry name" value="TAL_FSA"/>
    <property type="match status" value="1"/>
</dbReference>
<dbReference type="SUPFAM" id="SSF51569">
    <property type="entry name" value="Aldolase"/>
    <property type="match status" value="1"/>
</dbReference>
<dbReference type="PROSITE" id="PS00958">
    <property type="entry name" value="TRANSALDOLASE_2"/>
    <property type="match status" value="1"/>
</dbReference>
<evidence type="ECO:0000250" key="1"/>
<evidence type="ECO:0000255" key="2">
    <source>
        <dbReference type="HAMAP-Rule" id="MF_00492"/>
    </source>
</evidence>
<evidence type="ECO:0000305" key="3"/>
<sequence length="316" mass="35652">MNELDGIKQFTTVVADSCDIESIRHYHPQDATANPSLLLKAAGLSQYEHLIDDAIAWGKKNGKTQEQQVVAACDKLAVNFGAEILKIVPGCVSTEVDARLSFDKEKSIEKARHLVDLYQQQGVEKSRILIKLASTWEGIRAAEELEKEGINCNLTLLFSFTQARACAEAGVFLISPFVGRIYDWYQARKPMDPYVVEEDPGVKSVRNIYDYYKQHHYETIVMGASFRRTEQILALTGCDRLTIAPNLLKELQEKVSPVVRKLIPPSQTFPRPAPMSEAEFRWEHNQDAMAVEKLSEGIRLFAVDQRKLEDLLAAKL</sequence>
<comment type="function">
    <text evidence="2">Transaldolase is important for the balance of metabolites in the pentose-phosphate pathway.</text>
</comment>
<comment type="catalytic activity">
    <reaction evidence="2">
        <text>D-sedoheptulose 7-phosphate + D-glyceraldehyde 3-phosphate = D-erythrose 4-phosphate + beta-D-fructose 6-phosphate</text>
        <dbReference type="Rhea" id="RHEA:17053"/>
        <dbReference type="ChEBI" id="CHEBI:16897"/>
        <dbReference type="ChEBI" id="CHEBI:57483"/>
        <dbReference type="ChEBI" id="CHEBI:57634"/>
        <dbReference type="ChEBI" id="CHEBI:59776"/>
        <dbReference type="EC" id="2.2.1.2"/>
    </reaction>
</comment>
<comment type="pathway">
    <text evidence="2">Carbohydrate degradation; pentose phosphate pathway; D-glyceraldehyde 3-phosphate and beta-D-fructose 6-phosphate from D-ribose 5-phosphate and D-xylulose 5-phosphate (non-oxidative stage): step 2/3.</text>
</comment>
<comment type="subunit">
    <text evidence="1">Homodimer.</text>
</comment>
<comment type="subcellular location">
    <subcellularLocation>
        <location evidence="2">Cytoplasm</location>
    </subcellularLocation>
</comment>
<comment type="similarity">
    <text evidence="2">Belongs to the transaldolase family. Type 1 subfamily.</text>
</comment>
<organism>
    <name type="scientific">Shigella flexneri</name>
    <dbReference type="NCBI Taxonomy" id="623"/>
    <lineage>
        <taxon>Bacteria</taxon>
        <taxon>Pseudomonadati</taxon>
        <taxon>Pseudomonadota</taxon>
        <taxon>Gammaproteobacteria</taxon>
        <taxon>Enterobacterales</taxon>
        <taxon>Enterobacteriaceae</taxon>
        <taxon>Shigella</taxon>
    </lineage>
</organism>
<keyword id="KW-0963">Cytoplasm</keyword>
<keyword id="KW-0570">Pentose shunt</keyword>
<keyword id="KW-1185">Reference proteome</keyword>
<keyword id="KW-0704">Schiff base</keyword>
<keyword id="KW-0808">Transferase</keyword>
<protein>
    <recommendedName>
        <fullName evidence="2">Transaldolase A</fullName>
        <ecNumber evidence="2">2.2.1.2</ecNumber>
    </recommendedName>
</protein>
<feature type="chain" id="PRO_0000173616" description="Transaldolase A">
    <location>
        <begin position="1"/>
        <end position="316"/>
    </location>
</feature>
<feature type="active site" description="Schiff-base intermediate with substrate" evidence="2">
    <location>
        <position position="131"/>
    </location>
</feature>
<feature type="sequence conflict" description="In Ref. 2; AAP17825." evidence="3" ref="2">
    <original>A</original>
    <variation>T</variation>
    <location>
        <position position="33"/>
    </location>
</feature>
<accession>Q83QM8</accession>
<accession>Q7UC15</accession>